<gene>
    <name evidence="8" type="primary">TMEM268</name>
    <name type="synonym">C9orf91</name>
</gene>
<reference key="1">
    <citation type="journal article" date="2004" name="Nature">
        <title>DNA sequence and analysis of human chromosome 9.</title>
        <authorList>
            <person name="Humphray S.J."/>
            <person name="Oliver K."/>
            <person name="Hunt A.R."/>
            <person name="Plumb R.W."/>
            <person name="Loveland J.E."/>
            <person name="Howe K.L."/>
            <person name="Andrews T.D."/>
            <person name="Searle S."/>
            <person name="Hunt S.E."/>
            <person name="Scott C.E."/>
            <person name="Jones M.C."/>
            <person name="Ainscough R."/>
            <person name="Almeida J.P."/>
            <person name="Ambrose K.D."/>
            <person name="Ashwell R.I.S."/>
            <person name="Babbage A.K."/>
            <person name="Babbage S."/>
            <person name="Bagguley C.L."/>
            <person name="Bailey J."/>
            <person name="Banerjee R."/>
            <person name="Barker D.J."/>
            <person name="Barlow K.F."/>
            <person name="Bates K."/>
            <person name="Beasley H."/>
            <person name="Beasley O."/>
            <person name="Bird C.P."/>
            <person name="Bray-Allen S."/>
            <person name="Brown A.J."/>
            <person name="Brown J.Y."/>
            <person name="Burford D."/>
            <person name="Burrill W."/>
            <person name="Burton J."/>
            <person name="Carder C."/>
            <person name="Carter N.P."/>
            <person name="Chapman J.C."/>
            <person name="Chen Y."/>
            <person name="Clarke G."/>
            <person name="Clark S.Y."/>
            <person name="Clee C.M."/>
            <person name="Clegg S."/>
            <person name="Collier R.E."/>
            <person name="Corby N."/>
            <person name="Crosier M."/>
            <person name="Cummings A.T."/>
            <person name="Davies J."/>
            <person name="Dhami P."/>
            <person name="Dunn M."/>
            <person name="Dutta I."/>
            <person name="Dyer L.W."/>
            <person name="Earthrowl M.E."/>
            <person name="Faulkner L."/>
            <person name="Fleming C.J."/>
            <person name="Frankish A."/>
            <person name="Frankland J.A."/>
            <person name="French L."/>
            <person name="Fricker D.G."/>
            <person name="Garner P."/>
            <person name="Garnett J."/>
            <person name="Ghori J."/>
            <person name="Gilbert J.G.R."/>
            <person name="Glison C."/>
            <person name="Grafham D.V."/>
            <person name="Gribble S."/>
            <person name="Griffiths C."/>
            <person name="Griffiths-Jones S."/>
            <person name="Grocock R."/>
            <person name="Guy J."/>
            <person name="Hall R.E."/>
            <person name="Hammond S."/>
            <person name="Harley J.L."/>
            <person name="Harrison E.S.I."/>
            <person name="Hart E.A."/>
            <person name="Heath P.D."/>
            <person name="Henderson C.D."/>
            <person name="Hopkins B.L."/>
            <person name="Howard P.J."/>
            <person name="Howden P.J."/>
            <person name="Huckle E."/>
            <person name="Johnson C."/>
            <person name="Johnson D."/>
            <person name="Joy A.A."/>
            <person name="Kay M."/>
            <person name="Keenan S."/>
            <person name="Kershaw J.K."/>
            <person name="Kimberley A.M."/>
            <person name="King A."/>
            <person name="Knights A."/>
            <person name="Laird G.K."/>
            <person name="Langford C."/>
            <person name="Lawlor S."/>
            <person name="Leongamornlert D.A."/>
            <person name="Leversha M."/>
            <person name="Lloyd C."/>
            <person name="Lloyd D.M."/>
            <person name="Lovell J."/>
            <person name="Martin S."/>
            <person name="Mashreghi-Mohammadi M."/>
            <person name="Matthews L."/>
            <person name="McLaren S."/>
            <person name="McLay K.E."/>
            <person name="McMurray A."/>
            <person name="Milne S."/>
            <person name="Nickerson T."/>
            <person name="Nisbett J."/>
            <person name="Nordsiek G."/>
            <person name="Pearce A.V."/>
            <person name="Peck A.I."/>
            <person name="Porter K.M."/>
            <person name="Pandian R."/>
            <person name="Pelan S."/>
            <person name="Phillimore B."/>
            <person name="Povey S."/>
            <person name="Ramsey Y."/>
            <person name="Rand V."/>
            <person name="Scharfe M."/>
            <person name="Sehra H.K."/>
            <person name="Shownkeen R."/>
            <person name="Sims S.K."/>
            <person name="Skuce C.D."/>
            <person name="Smith M."/>
            <person name="Steward C.A."/>
            <person name="Swarbreck D."/>
            <person name="Sycamore N."/>
            <person name="Tester J."/>
            <person name="Thorpe A."/>
            <person name="Tracey A."/>
            <person name="Tromans A."/>
            <person name="Thomas D.W."/>
            <person name="Wall M."/>
            <person name="Wallis J.M."/>
            <person name="West A.P."/>
            <person name="Whitehead S.L."/>
            <person name="Willey D.L."/>
            <person name="Williams S.A."/>
            <person name="Wilming L."/>
            <person name="Wray P.W."/>
            <person name="Young L."/>
            <person name="Ashurst J.L."/>
            <person name="Coulson A."/>
            <person name="Blocker H."/>
            <person name="Durbin R.M."/>
            <person name="Sulston J.E."/>
            <person name="Hubbard T."/>
            <person name="Jackson M.J."/>
            <person name="Bentley D.R."/>
            <person name="Beck S."/>
            <person name="Rogers J."/>
            <person name="Dunham I."/>
        </authorList>
    </citation>
    <scope>NUCLEOTIDE SEQUENCE [LARGE SCALE GENOMIC DNA]</scope>
</reference>
<reference key="2">
    <citation type="journal article" date="2007" name="BMC Genomics">
        <title>The full-ORF clone resource of the German cDNA consortium.</title>
        <authorList>
            <person name="Bechtel S."/>
            <person name="Rosenfelder H."/>
            <person name="Duda A."/>
            <person name="Schmidt C.P."/>
            <person name="Ernst U."/>
            <person name="Wellenreuther R."/>
            <person name="Mehrle A."/>
            <person name="Schuster C."/>
            <person name="Bahr A."/>
            <person name="Bloecker H."/>
            <person name="Heubner D."/>
            <person name="Hoerlein A."/>
            <person name="Michel G."/>
            <person name="Wedler H."/>
            <person name="Koehrer K."/>
            <person name="Ottenwaelder B."/>
            <person name="Poustka A."/>
            <person name="Wiemann S."/>
            <person name="Schupp I."/>
        </authorList>
    </citation>
    <scope>NUCLEOTIDE SEQUENCE [LARGE SCALE MRNA] (ISOFORM 1)</scope>
    <scope>NUCLEOTIDE SEQUENCE [LARGE SCALE MRNA] OF 59-342 (ISOFORM 3)</scope>
    <source>
        <tissue>Brain</tissue>
        <tissue>Fetal liver</tissue>
    </source>
</reference>
<reference key="3">
    <citation type="journal article" date="2004" name="Genome Res.">
        <title>The status, quality, and expansion of the NIH full-length cDNA project: the Mammalian Gene Collection (MGC).</title>
        <authorList>
            <consortium name="The MGC Project Team"/>
        </authorList>
    </citation>
    <scope>NUCLEOTIDE SEQUENCE [LARGE SCALE MRNA] (ISOFORMS 1 AND 2)</scope>
    <source>
        <tissue>Brain</tissue>
        <tissue>Lung</tissue>
    </source>
</reference>
<reference key="4">
    <citation type="journal article" date="2004" name="Nat. Genet.">
        <title>Complete sequencing and characterization of 21,243 full-length human cDNAs.</title>
        <authorList>
            <person name="Ota T."/>
            <person name="Suzuki Y."/>
            <person name="Nishikawa T."/>
            <person name="Otsuki T."/>
            <person name="Sugiyama T."/>
            <person name="Irie R."/>
            <person name="Wakamatsu A."/>
            <person name="Hayashi K."/>
            <person name="Sato H."/>
            <person name="Nagai K."/>
            <person name="Kimura K."/>
            <person name="Makita H."/>
            <person name="Sekine M."/>
            <person name="Obayashi M."/>
            <person name="Nishi T."/>
            <person name="Shibahara T."/>
            <person name="Tanaka T."/>
            <person name="Ishii S."/>
            <person name="Yamamoto J."/>
            <person name="Saito K."/>
            <person name="Kawai Y."/>
            <person name="Isono Y."/>
            <person name="Nakamura Y."/>
            <person name="Nagahari K."/>
            <person name="Murakami K."/>
            <person name="Yasuda T."/>
            <person name="Iwayanagi T."/>
            <person name="Wagatsuma M."/>
            <person name="Shiratori A."/>
            <person name="Sudo H."/>
            <person name="Hosoiri T."/>
            <person name="Kaku Y."/>
            <person name="Kodaira H."/>
            <person name="Kondo H."/>
            <person name="Sugawara M."/>
            <person name="Takahashi M."/>
            <person name="Kanda K."/>
            <person name="Yokoi T."/>
            <person name="Furuya T."/>
            <person name="Kikkawa E."/>
            <person name="Omura Y."/>
            <person name="Abe K."/>
            <person name="Kamihara K."/>
            <person name="Katsuta N."/>
            <person name="Sato K."/>
            <person name="Tanikawa M."/>
            <person name="Yamazaki M."/>
            <person name="Ninomiya K."/>
            <person name="Ishibashi T."/>
            <person name="Yamashita H."/>
            <person name="Murakawa K."/>
            <person name="Fujimori K."/>
            <person name="Tanai H."/>
            <person name="Kimata M."/>
            <person name="Watanabe M."/>
            <person name="Hiraoka S."/>
            <person name="Chiba Y."/>
            <person name="Ishida S."/>
            <person name="Ono Y."/>
            <person name="Takiguchi S."/>
            <person name="Watanabe S."/>
            <person name="Yosida M."/>
            <person name="Hotuta T."/>
            <person name="Kusano J."/>
            <person name="Kanehori K."/>
            <person name="Takahashi-Fujii A."/>
            <person name="Hara H."/>
            <person name="Tanase T.-O."/>
            <person name="Nomura Y."/>
            <person name="Togiya S."/>
            <person name="Komai F."/>
            <person name="Hara R."/>
            <person name="Takeuchi K."/>
            <person name="Arita M."/>
            <person name="Imose N."/>
            <person name="Musashino K."/>
            <person name="Yuuki H."/>
            <person name="Oshima A."/>
            <person name="Sasaki N."/>
            <person name="Aotsuka S."/>
            <person name="Yoshikawa Y."/>
            <person name="Matsunawa H."/>
            <person name="Ichihara T."/>
            <person name="Shiohata N."/>
            <person name="Sano S."/>
            <person name="Moriya S."/>
            <person name="Momiyama H."/>
            <person name="Satoh N."/>
            <person name="Takami S."/>
            <person name="Terashima Y."/>
            <person name="Suzuki O."/>
            <person name="Nakagawa S."/>
            <person name="Senoh A."/>
            <person name="Mizoguchi H."/>
            <person name="Goto Y."/>
            <person name="Shimizu F."/>
            <person name="Wakebe H."/>
            <person name="Hishigaki H."/>
            <person name="Watanabe T."/>
            <person name="Sugiyama A."/>
            <person name="Takemoto M."/>
            <person name="Kawakami B."/>
            <person name="Yamazaki M."/>
            <person name="Watanabe K."/>
            <person name="Kumagai A."/>
            <person name="Itakura S."/>
            <person name="Fukuzumi Y."/>
            <person name="Fujimori Y."/>
            <person name="Komiyama M."/>
            <person name="Tashiro H."/>
            <person name="Tanigami A."/>
            <person name="Fujiwara T."/>
            <person name="Ono T."/>
            <person name="Yamada K."/>
            <person name="Fujii Y."/>
            <person name="Ozaki K."/>
            <person name="Hirao M."/>
            <person name="Ohmori Y."/>
            <person name="Kawabata A."/>
            <person name="Hikiji T."/>
            <person name="Kobatake N."/>
            <person name="Inagaki H."/>
            <person name="Ikema Y."/>
            <person name="Okamoto S."/>
            <person name="Okitani R."/>
            <person name="Kawakami T."/>
            <person name="Noguchi S."/>
            <person name="Itoh T."/>
            <person name="Shigeta K."/>
            <person name="Senba T."/>
            <person name="Matsumura K."/>
            <person name="Nakajima Y."/>
            <person name="Mizuno T."/>
            <person name="Morinaga M."/>
            <person name="Sasaki M."/>
            <person name="Togashi T."/>
            <person name="Oyama M."/>
            <person name="Hata H."/>
            <person name="Watanabe M."/>
            <person name="Komatsu T."/>
            <person name="Mizushima-Sugano J."/>
            <person name="Satoh T."/>
            <person name="Shirai Y."/>
            <person name="Takahashi Y."/>
            <person name="Nakagawa K."/>
            <person name="Okumura K."/>
            <person name="Nagase T."/>
            <person name="Nomura N."/>
            <person name="Kikuchi H."/>
            <person name="Masuho Y."/>
            <person name="Yamashita R."/>
            <person name="Nakai K."/>
            <person name="Yada T."/>
            <person name="Nakamura Y."/>
            <person name="Ohara O."/>
            <person name="Isogai T."/>
            <person name="Sugano S."/>
        </authorList>
    </citation>
    <scope>NUCLEOTIDE SEQUENCE [LARGE SCALE MRNA] OF 59-342 (ISOFORM 1)</scope>
    <source>
        <tissue>Tongue</tissue>
    </source>
</reference>
<reference key="5">
    <citation type="journal article" date="2019" name="Cell Death Differ.">
        <title>Deletion of TMEM268 inhibits growth of gastric cancer cells by downregulating the ITGB4 signaling pathway.</title>
        <authorList>
            <person name="Hong D."/>
            <person name="Zhang X."/>
            <person name="Li R."/>
            <person name="Yu J."/>
            <person name="Lou Y."/>
            <person name="He Q."/>
            <person name="Li X."/>
            <person name="Xu D."/>
            <person name="Lv P."/>
            <person name="Lin J."/>
            <person name="Chen Y."/>
        </authorList>
    </citation>
    <scope>SUBCELLULAR LOCATION</scope>
    <scope>INTERACTION WITH ITGB4</scope>
</reference>
<reference key="6">
    <citation type="journal article" date="2024" name="EMBO Rep.">
        <title>Deletion of Tmem268 in mice suppresses anti-infectious immune responses by downregulating CD11b signaling.</title>
        <authorList>
            <person name="Duan M."/>
            <person name="Zhang X."/>
            <person name="Lou Y."/>
            <person name="Feng J."/>
            <person name="Guo P."/>
            <person name="Ye S."/>
            <person name="Lv P."/>
            <person name="Chen Y."/>
        </authorList>
    </citation>
    <scope>FUNCTION</scope>
    <scope>INTERACTION WITH ITGAM</scope>
</reference>
<name>TM268_HUMAN</name>
<evidence type="ECO:0000255" key="1"/>
<evidence type="ECO:0000256" key="2">
    <source>
        <dbReference type="SAM" id="MobiDB-lite"/>
    </source>
</evidence>
<evidence type="ECO:0000269" key="3">
    <source>
    </source>
</evidence>
<evidence type="ECO:0000269" key="4">
    <source>
    </source>
</evidence>
<evidence type="ECO:0000303" key="5">
    <source>
    </source>
</evidence>
<evidence type="ECO:0000303" key="6">
    <source>
    </source>
</evidence>
<evidence type="ECO:0000305" key="7"/>
<evidence type="ECO:0000312" key="8">
    <source>
        <dbReference type="HGNC" id="HGNC:24513"/>
    </source>
</evidence>
<accession>Q5VZI3</accession>
<accession>A0PJA3</accession>
<accession>Q3KNS4</accession>
<accession>Q5VZI2</accession>
<accession>Q6P5Z7</accession>
<accession>Q8N1P3</accession>
<accession>Q8ND43</accession>
<keyword id="KW-0025">Alternative splicing</keyword>
<keyword id="KW-1003">Cell membrane</keyword>
<keyword id="KW-0472">Membrane</keyword>
<keyword id="KW-1267">Proteomics identification</keyword>
<keyword id="KW-1185">Reference proteome</keyword>
<keyword id="KW-0812">Transmembrane</keyword>
<keyword id="KW-1133">Transmembrane helix</keyword>
<proteinExistence type="evidence at protein level"/>
<protein>
    <recommendedName>
        <fullName evidence="8">Transmembrane protein 268</fullName>
    </recommendedName>
</protein>
<sequence>MACEPQVDPGATGPLPPSSPGWSALPGGSPPGWGQELHNGQVLTVLRIDNTCAPISFDLGAAEEQLQTWGIQVPADQYRSLAESALLEPQVRRYIIYNSRPMRLAFAVVFYVVVWANIYSTSQMFALGNHWAGMLLVTLAAVSLTLTLVLVFERHQKKANTNTDLRLAAANGALLRHRVLLGVTDTVEGCQSVIQLWFVYFDLENCVQFLSDHVQEMKTSQESLLRSRLSQLCVVMETGVSPATAEGPENLEDAPLLPGNSCPNERPLMQTELHQLVPEAEPEEMARQLLAVFGGYYIRLLVTSQLPQAMGTRHTNSPRIPCPCQLIEAYILGTGCCPFLAR</sequence>
<dbReference type="EMBL" id="AL160275">
    <property type="status" value="NOT_ANNOTATED_CDS"/>
    <property type="molecule type" value="Genomic_DNA"/>
</dbReference>
<dbReference type="EMBL" id="BX649023">
    <property type="status" value="NOT_ANNOTATED_CDS"/>
    <property type="molecule type" value="mRNA"/>
</dbReference>
<dbReference type="EMBL" id="BC019913">
    <property type="protein sequence ID" value="AAH19913.1"/>
    <property type="molecule type" value="mRNA"/>
</dbReference>
<dbReference type="EMBL" id="BC062550">
    <property type="protein sequence ID" value="AAH62550.1"/>
    <property type="molecule type" value="mRNA"/>
</dbReference>
<dbReference type="EMBL" id="BC107133">
    <property type="protein sequence ID" value="AAI07134.1"/>
    <property type="molecule type" value="mRNA"/>
</dbReference>
<dbReference type="EMBL" id="BC107134">
    <property type="protein sequence ID" value="AAI07135.1"/>
    <property type="molecule type" value="mRNA"/>
</dbReference>
<dbReference type="EMBL" id="AL834412">
    <property type="protein sequence ID" value="CAD39074.1"/>
    <property type="molecule type" value="mRNA"/>
</dbReference>
<dbReference type="EMBL" id="AK095364">
    <property type="protein sequence ID" value="BAC04537.1"/>
    <property type="status" value="ALT_INIT"/>
    <property type="molecule type" value="mRNA"/>
</dbReference>
<dbReference type="CCDS" id="CCDS6808.1">
    <molecule id="Q5VZI3-1"/>
</dbReference>
<dbReference type="CCDS" id="CCDS83405.1">
    <molecule id="Q5VZI3-3"/>
</dbReference>
<dbReference type="RefSeq" id="NP_001317689.1">
    <molecule id="Q5VZI3-3"/>
    <property type="nucleotide sequence ID" value="NM_001330760.2"/>
</dbReference>
<dbReference type="RefSeq" id="NP_694590.2">
    <molecule id="Q5VZI3-1"/>
    <property type="nucleotide sequence ID" value="NM_153045.3"/>
</dbReference>
<dbReference type="RefSeq" id="XP_011516657.1">
    <molecule id="Q5VZI3-2"/>
    <property type="nucleotide sequence ID" value="XM_011518355.2"/>
</dbReference>
<dbReference type="RefSeq" id="XP_024303209.1">
    <molecule id="Q5VZI3-1"/>
    <property type="nucleotide sequence ID" value="XM_024447441.1"/>
</dbReference>
<dbReference type="RefSeq" id="XP_047278880.1">
    <molecule id="Q5VZI3-3"/>
    <property type="nucleotide sequence ID" value="XM_047422924.1"/>
</dbReference>
<dbReference type="RefSeq" id="XP_047278881.1">
    <molecule id="Q5VZI3-1"/>
    <property type="nucleotide sequence ID" value="XM_047422925.1"/>
</dbReference>
<dbReference type="RefSeq" id="XP_054218237.1">
    <molecule id="Q5VZI3-3"/>
    <property type="nucleotide sequence ID" value="XM_054362262.1"/>
</dbReference>
<dbReference type="RefSeq" id="XP_054218238.1">
    <molecule id="Q5VZI3-1"/>
    <property type="nucleotide sequence ID" value="XM_054362263.1"/>
</dbReference>
<dbReference type="RefSeq" id="XP_054218239.1">
    <molecule id="Q5VZI3-1"/>
    <property type="nucleotide sequence ID" value="XM_054362264.1"/>
</dbReference>
<dbReference type="RefSeq" id="XP_054218241.1">
    <molecule id="Q5VZI3-2"/>
    <property type="nucleotide sequence ID" value="XM_054362266.1"/>
</dbReference>
<dbReference type="BioGRID" id="128455">
    <property type="interactions" value="31"/>
</dbReference>
<dbReference type="FunCoup" id="Q5VZI3">
    <property type="interactions" value="121"/>
</dbReference>
<dbReference type="IntAct" id="Q5VZI3">
    <property type="interactions" value="24"/>
</dbReference>
<dbReference type="STRING" id="9606.ENSP00000363161"/>
<dbReference type="GlyGen" id="Q5VZI3">
    <property type="glycosylation" value="1 site, 1 O-linked glycan (1 site)"/>
</dbReference>
<dbReference type="iPTMnet" id="Q5VZI3"/>
<dbReference type="PhosphoSitePlus" id="Q5VZI3"/>
<dbReference type="SwissPalm" id="Q5VZI3"/>
<dbReference type="BioMuta" id="TMEM268"/>
<dbReference type="DMDM" id="74747808"/>
<dbReference type="jPOST" id="Q5VZI3"/>
<dbReference type="MassIVE" id="Q5VZI3"/>
<dbReference type="PaxDb" id="9606-ENSP00000288502"/>
<dbReference type="PeptideAtlas" id="Q5VZI3"/>
<dbReference type="ProteomicsDB" id="65698">
    <molecule id="Q5VZI3-1"/>
</dbReference>
<dbReference type="ProteomicsDB" id="65699">
    <molecule id="Q5VZI3-2"/>
</dbReference>
<dbReference type="ProteomicsDB" id="65700">
    <molecule id="Q5VZI3-3"/>
</dbReference>
<dbReference type="Pumba" id="Q5VZI3"/>
<dbReference type="Antibodypedia" id="15584">
    <property type="antibodies" value="85 antibodies from 15 providers"/>
</dbReference>
<dbReference type="DNASU" id="203197"/>
<dbReference type="Ensembl" id="ENST00000288502.9">
    <molecule id="Q5VZI3-1"/>
    <property type="protein sequence ID" value="ENSP00000288502.4"/>
    <property type="gene ID" value="ENSG00000157693.15"/>
</dbReference>
<dbReference type="Ensembl" id="ENST00000374049.4">
    <molecule id="Q5VZI3-3"/>
    <property type="protein sequence ID" value="ENSP00000363161.4"/>
    <property type="gene ID" value="ENSG00000157693.15"/>
</dbReference>
<dbReference type="GeneID" id="203197"/>
<dbReference type="KEGG" id="hsa:203197"/>
<dbReference type="MANE-Select" id="ENST00000288502.9">
    <property type="protein sequence ID" value="ENSP00000288502.4"/>
    <property type="RefSeq nucleotide sequence ID" value="NM_153045.4"/>
    <property type="RefSeq protein sequence ID" value="NP_694590.2"/>
</dbReference>
<dbReference type="UCSC" id="uc004bjd.5">
    <molecule id="Q5VZI3-1"/>
    <property type="organism name" value="human"/>
</dbReference>
<dbReference type="AGR" id="HGNC:24513"/>
<dbReference type="CTD" id="203197"/>
<dbReference type="DisGeNET" id="203197"/>
<dbReference type="GeneCards" id="TMEM268"/>
<dbReference type="HGNC" id="HGNC:24513">
    <property type="gene designation" value="TMEM268"/>
</dbReference>
<dbReference type="HPA" id="ENSG00000157693">
    <property type="expression patterns" value="Low tissue specificity"/>
</dbReference>
<dbReference type="neXtProt" id="NX_Q5VZI3"/>
<dbReference type="OpenTargets" id="ENSG00000157693"/>
<dbReference type="PharmGKB" id="PA134931542"/>
<dbReference type="VEuPathDB" id="HostDB:ENSG00000157693"/>
<dbReference type="eggNOG" id="ENOG502R635">
    <property type="taxonomic scope" value="Eukaryota"/>
</dbReference>
<dbReference type="GeneTree" id="ENSGT00390000011559"/>
<dbReference type="HOGENOM" id="CLU_067585_1_0_1"/>
<dbReference type="InParanoid" id="Q5VZI3"/>
<dbReference type="OMA" id="YVTLWIN"/>
<dbReference type="OrthoDB" id="8250049at2759"/>
<dbReference type="PAN-GO" id="Q5VZI3">
    <property type="GO annotations" value="0 GO annotations based on evolutionary models"/>
</dbReference>
<dbReference type="PhylomeDB" id="Q5VZI3"/>
<dbReference type="TreeFam" id="TF353168"/>
<dbReference type="PathwayCommons" id="Q5VZI3"/>
<dbReference type="SignaLink" id="Q5VZI3"/>
<dbReference type="BioGRID-ORCS" id="203197">
    <property type="hits" value="8 hits in 1151 CRISPR screens"/>
</dbReference>
<dbReference type="ChiTaRS" id="TMEM268">
    <property type="organism name" value="human"/>
</dbReference>
<dbReference type="GenomeRNAi" id="203197"/>
<dbReference type="Pharos" id="Q5VZI3">
    <property type="development level" value="Tdark"/>
</dbReference>
<dbReference type="PRO" id="PR:Q5VZI3"/>
<dbReference type="Proteomes" id="UP000005640">
    <property type="component" value="Chromosome 9"/>
</dbReference>
<dbReference type="RNAct" id="Q5VZI3">
    <property type="molecule type" value="protein"/>
</dbReference>
<dbReference type="Bgee" id="ENSG00000157693">
    <property type="expression patterns" value="Expressed in endothelial cell and 174 other cell types or tissues"/>
</dbReference>
<dbReference type="GO" id="GO:0005886">
    <property type="term" value="C:plasma membrane"/>
    <property type="evidence" value="ECO:0007669"/>
    <property type="project" value="UniProtKB-SubCell"/>
</dbReference>
<dbReference type="InterPro" id="IPR028054">
    <property type="entry name" value="DUF4481"/>
</dbReference>
<dbReference type="PANTHER" id="PTHR31193:SF1">
    <property type="entry name" value="TRANSMEMBRANE PROTEIN 268"/>
    <property type="match status" value="1"/>
</dbReference>
<dbReference type="PANTHER" id="PTHR31193">
    <property type="entry name" value="TRANSMEMBRANE PROTEIN C9ORF91"/>
    <property type="match status" value="1"/>
</dbReference>
<dbReference type="Pfam" id="PF14800">
    <property type="entry name" value="DUF4481"/>
    <property type="match status" value="1"/>
</dbReference>
<feature type="chain" id="PRO_0000279425" description="Transmembrane protein 268">
    <location>
        <begin position="1"/>
        <end position="342"/>
    </location>
</feature>
<feature type="transmembrane region" description="Helical" evidence="1">
    <location>
        <begin position="105"/>
        <end position="125"/>
    </location>
</feature>
<feature type="transmembrane region" description="Helical" evidence="1">
    <location>
        <begin position="132"/>
        <end position="152"/>
    </location>
</feature>
<feature type="region of interest" description="Disordered" evidence="2">
    <location>
        <begin position="1"/>
        <end position="30"/>
    </location>
</feature>
<feature type="splice variant" id="VSP_023426" description="In isoform 2." evidence="5">
    <original>MACEPQVDPGATGPLPPSSPGWSALPGGSPPGWGQ</original>
    <variation>MVITQPDEASGLLP</variation>
    <location>
        <begin position="1"/>
        <end position="35"/>
    </location>
</feature>
<feature type="splice variant" id="VSP_023427" description="In isoform 3." evidence="6">
    <original>I</original>
    <variation>IQ</variation>
    <location>
        <position position="71"/>
    </location>
</feature>
<feature type="sequence conflict" description="In Ref. 4; CAD39074." evidence="7" ref="4">
    <original>LGAA</original>
    <variation>PTRP</variation>
    <location>
        <begin position="59"/>
        <end position="62"/>
    </location>
</feature>
<organism>
    <name type="scientific">Homo sapiens</name>
    <name type="common">Human</name>
    <dbReference type="NCBI Taxonomy" id="9606"/>
    <lineage>
        <taxon>Eukaryota</taxon>
        <taxon>Metazoa</taxon>
        <taxon>Chordata</taxon>
        <taxon>Craniata</taxon>
        <taxon>Vertebrata</taxon>
        <taxon>Euteleostomi</taxon>
        <taxon>Mammalia</taxon>
        <taxon>Eutheria</taxon>
        <taxon>Euarchontoglires</taxon>
        <taxon>Primates</taxon>
        <taxon>Haplorrhini</taxon>
        <taxon>Catarrhini</taxon>
        <taxon>Hominidae</taxon>
        <taxon>Homo</taxon>
    </lineage>
</organism>
<comment type="function">
    <text evidence="4">Stabilizes cell surface expression of ITGAM and participates in the adhesion and migration of phagocytes during bacterial clearance.</text>
</comment>
<comment type="subunit">
    <text evidence="4">Interacts with ITGAM; this interaction inhibits ITGAM degradation via the endosome-lysosome pathway (PubMed:38730209). Interacts with ITGB4; this interaction prevents ITGB4 degradation (PubMed:38730209).</text>
</comment>
<comment type="subcellular location">
    <subcellularLocation>
        <location evidence="3">Cell membrane</location>
        <topology evidence="7">Multi-pass membrane protein</topology>
    </subcellularLocation>
</comment>
<comment type="alternative products">
    <event type="alternative splicing"/>
    <isoform>
        <id>Q5VZI3-1</id>
        <name>1</name>
        <sequence type="displayed"/>
    </isoform>
    <isoform>
        <id>Q5VZI3-2</id>
        <name>2</name>
        <sequence type="described" ref="VSP_023426"/>
    </isoform>
    <isoform>
        <id>Q5VZI3-3</id>
        <name>3</name>
        <sequence type="described" ref="VSP_023427"/>
    </isoform>
</comment>
<comment type="sequence caution" evidence="7">
    <conflict type="erroneous initiation">
        <sequence resource="EMBL-CDS" id="BAC04537"/>
    </conflict>
    <text>Truncated N-terminus.</text>
</comment>